<sequence length="18" mass="2169">AYSYVSEYKRLPVYNFGL</sequence>
<proteinExistence type="evidence at protein level"/>
<comment type="subcellular location">
    <subcellularLocation>
        <location>Secreted</location>
    </subcellularLocation>
</comment>
<comment type="similarity">
    <text evidence="2">Belongs to the allatostatin family.</text>
</comment>
<dbReference type="GO" id="GO:0005576">
    <property type="term" value="C:extracellular region"/>
    <property type="evidence" value="ECO:0007669"/>
    <property type="project" value="UniProtKB-SubCell"/>
</dbReference>
<dbReference type="GO" id="GO:0007218">
    <property type="term" value="P:neuropeptide signaling pathway"/>
    <property type="evidence" value="ECO:0007669"/>
    <property type="project" value="UniProtKB-KW"/>
</dbReference>
<feature type="peptide" id="PRO_0000043477" description="Cydiastatin-2">
    <location>
        <begin position="1"/>
        <end position="18"/>
    </location>
</feature>
<feature type="modified residue" description="Leucine amide" evidence="1">
    <location>
        <position position="18"/>
    </location>
</feature>
<evidence type="ECO:0000269" key="1">
    <source>
    </source>
</evidence>
<evidence type="ECO:0000305" key="2"/>
<name>ALL2_CYDPO</name>
<accession>P82153</accession>
<protein>
    <recommendedName>
        <fullName>Cydiastatin-2</fullName>
    </recommendedName>
</protein>
<reference key="1">
    <citation type="journal article" date="1997" name="Peptides">
        <title>Lepidopteran peptides of the allatostatin superfamily.</title>
        <authorList>
            <person name="Duve H."/>
            <person name="Johnsen A.H."/>
            <person name="Maestro J.-L."/>
            <person name="Scott A.G."/>
            <person name="Winstanley D."/>
            <person name="Davey M."/>
            <person name="East P.D."/>
            <person name="Thorpe A."/>
        </authorList>
    </citation>
    <scope>PROTEIN SEQUENCE</scope>
    <scope>AMIDATION AT LEU-18</scope>
    <source>
        <tissue>Larva</tissue>
    </source>
</reference>
<organism>
    <name type="scientific">Cydia pomonella</name>
    <name type="common">Codling moth</name>
    <dbReference type="NCBI Taxonomy" id="82600"/>
    <lineage>
        <taxon>Eukaryota</taxon>
        <taxon>Metazoa</taxon>
        <taxon>Ecdysozoa</taxon>
        <taxon>Arthropoda</taxon>
        <taxon>Hexapoda</taxon>
        <taxon>Insecta</taxon>
        <taxon>Pterygota</taxon>
        <taxon>Neoptera</taxon>
        <taxon>Endopterygota</taxon>
        <taxon>Lepidoptera</taxon>
        <taxon>Glossata</taxon>
        <taxon>Ditrysia</taxon>
        <taxon>Tortricoidea</taxon>
        <taxon>Tortricidae</taxon>
        <taxon>Olethreutinae</taxon>
        <taxon>Grapholitini</taxon>
        <taxon>Cydia</taxon>
    </lineage>
</organism>
<keyword id="KW-0027">Amidation</keyword>
<keyword id="KW-0903">Direct protein sequencing</keyword>
<keyword id="KW-0527">Neuropeptide</keyword>
<keyword id="KW-0964">Secreted</keyword>